<organism>
    <name type="scientific">Xanthomonas oryzae pv. oryzae (strain KACC10331 / KXO85)</name>
    <dbReference type="NCBI Taxonomy" id="291331"/>
    <lineage>
        <taxon>Bacteria</taxon>
        <taxon>Pseudomonadati</taxon>
        <taxon>Pseudomonadota</taxon>
        <taxon>Gammaproteobacteria</taxon>
        <taxon>Lysobacterales</taxon>
        <taxon>Lysobacteraceae</taxon>
        <taxon>Xanthomonas</taxon>
    </lineage>
</organism>
<gene>
    <name evidence="1" type="primary">glgA</name>
    <name type="ordered locus">XOO0112</name>
</gene>
<reference key="1">
    <citation type="journal article" date="2005" name="Nucleic Acids Res.">
        <title>The genome sequence of Xanthomonas oryzae pathovar oryzae KACC10331, the bacterial blight pathogen of rice.</title>
        <authorList>
            <person name="Lee B.-M."/>
            <person name="Park Y.-J."/>
            <person name="Park D.-S."/>
            <person name="Kang H.-W."/>
            <person name="Kim J.-G."/>
            <person name="Song E.-S."/>
            <person name="Park I.-C."/>
            <person name="Yoon U.-H."/>
            <person name="Hahn J.-H."/>
            <person name="Koo B.-S."/>
            <person name="Lee G.-B."/>
            <person name="Kim H."/>
            <person name="Park H.-S."/>
            <person name="Yoon K.-O."/>
            <person name="Kim J.-H."/>
            <person name="Jung C.-H."/>
            <person name="Koh N.-H."/>
            <person name="Seo J.-S."/>
            <person name="Go S.-J."/>
        </authorList>
    </citation>
    <scope>NUCLEOTIDE SEQUENCE [LARGE SCALE GENOMIC DNA]</scope>
    <source>
        <strain>KACC10331 / KXO85</strain>
    </source>
</reference>
<name>GLGA_XANOR</name>
<dbReference type="EC" id="2.4.1.21" evidence="1"/>
<dbReference type="EMBL" id="AE013598">
    <property type="protein sequence ID" value="AAW73366.1"/>
    <property type="status" value="ALT_INIT"/>
    <property type="molecule type" value="Genomic_DNA"/>
</dbReference>
<dbReference type="SMR" id="Q5H6Q4"/>
<dbReference type="STRING" id="291331.XOO0112"/>
<dbReference type="CAZy" id="GT5">
    <property type="family name" value="Glycosyltransferase Family 5"/>
</dbReference>
<dbReference type="KEGG" id="xoo:XOO0112"/>
<dbReference type="HOGENOM" id="CLU_009583_18_4_6"/>
<dbReference type="UniPathway" id="UPA00164"/>
<dbReference type="Proteomes" id="UP000006735">
    <property type="component" value="Chromosome"/>
</dbReference>
<dbReference type="GO" id="GO:0009011">
    <property type="term" value="F:alpha-1,4-glucan glucosyltransferase (ADP-glucose donor) activity"/>
    <property type="evidence" value="ECO:0007669"/>
    <property type="project" value="UniProtKB-UniRule"/>
</dbReference>
<dbReference type="GO" id="GO:0004373">
    <property type="term" value="F:alpha-1,4-glucan glucosyltransferase (UDP-glucose donor) activity"/>
    <property type="evidence" value="ECO:0007669"/>
    <property type="project" value="InterPro"/>
</dbReference>
<dbReference type="GO" id="GO:0005978">
    <property type="term" value="P:glycogen biosynthetic process"/>
    <property type="evidence" value="ECO:0007669"/>
    <property type="project" value="UniProtKB-UniRule"/>
</dbReference>
<dbReference type="CDD" id="cd03791">
    <property type="entry name" value="GT5_Glycogen_synthase_DULL1-like"/>
    <property type="match status" value="1"/>
</dbReference>
<dbReference type="Gene3D" id="3.40.50.2000">
    <property type="entry name" value="Glycogen Phosphorylase B"/>
    <property type="match status" value="2"/>
</dbReference>
<dbReference type="HAMAP" id="MF_00484">
    <property type="entry name" value="Glycogen_synth"/>
    <property type="match status" value="1"/>
</dbReference>
<dbReference type="InterPro" id="IPR001296">
    <property type="entry name" value="Glyco_trans_1"/>
</dbReference>
<dbReference type="InterPro" id="IPR011835">
    <property type="entry name" value="GS/SS"/>
</dbReference>
<dbReference type="InterPro" id="IPR013534">
    <property type="entry name" value="Starch_synth_cat_dom"/>
</dbReference>
<dbReference type="NCBIfam" id="TIGR02095">
    <property type="entry name" value="glgA"/>
    <property type="match status" value="1"/>
</dbReference>
<dbReference type="NCBIfam" id="NF001899">
    <property type="entry name" value="PRK00654.1-2"/>
    <property type="match status" value="1"/>
</dbReference>
<dbReference type="NCBIfam" id="NF001901">
    <property type="entry name" value="PRK00654.1-5"/>
    <property type="match status" value="1"/>
</dbReference>
<dbReference type="PANTHER" id="PTHR45825:SF8">
    <property type="entry name" value="GLYCOGEN SYNTHASE"/>
    <property type="match status" value="1"/>
</dbReference>
<dbReference type="PANTHER" id="PTHR45825">
    <property type="entry name" value="GRANULE-BOUND STARCH SYNTHASE 1, CHLOROPLASTIC/AMYLOPLASTIC"/>
    <property type="match status" value="1"/>
</dbReference>
<dbReference type="Pfam" id="PF08323">
    <property type="entry name" value="Glyco_transf_5"/>
    <property type="match status" value="1"/>
</dbReference>
<dbReference type="Pfam" id="PF00534">
    <property type="entry name" value="Glycos_transf_1"/>
    <property type="match status" value="1"/>
</dbReference>
<dbReference type="SUPFAM" id="SSF53756">
    <property type="entry name" value="UDP-Glycosyltransferase/glycogen phosphorylase"/>
    <property type="match status" value="1"/>
</dbReference>
<keyword id="KW-0320">Glycogen biosynthesis</keyword>
<keyword id="KW-0328">Glycosyltransferase</keyword>
<keyword id="KW-1185">Reference proteome</keyword>
<keyword id="KW-0808">Transferase</keyword>
<feature type="chain" id="PRO_0000230274" description="Glycogen synthase">
    <location>
        <begin position="1"/>
        <end position="509"/>
    </location>
</feature>
<feature type="binding site" evidence="1">
    <location>
        <position position="47"/>
    </location>
    <ligand>
        <name>ADP-alpha-D-glucose</name>
        <dbReference type="ChEBI" id="CHEBI:57498"/>
    </ligand>
</feature>
<comment type="function">
    <text evidence="1">Synthesizes alpha-1,4-glucan chains using ADP-glucose.</text>
</comment>
<comment type="catalytic activity">
    <reaction evidence="1">
        <text>[(1-&gt;4)-alpha-D-glucosyl](n) + ADP-alpha-D-glucose = [(1-&gt;4)-alpha-D-glucosyl](n+1) + ADP + H(+)</text>
        <dbReference type="Rhea" id="RHEA:18189"/>
        <dbReference type="Rhea" id="RHEA-COMP:9584"/>
        <dbReference type="Rhea" id="RHEA-COMP:9587"/>
        <dbReference type="ChEBI" id="CHEBI:15378"/>
        <dbReference type="ChEBI" id="CHEBI:15444"/>
        <dbReference type="ChEBI" id="CHEBI:57498"/>
        <dbReference type="ChEBI" id="CHEBI:456216"/>
        <dbReference type="EC" id="2.4.1.21"/>
    </reaction>
</comment>
<comment type="pathway">
    <text evidence="1">Glycan biosynthesis; glycogen biosynthesis.</text>
</comment>
<comment type="similarity">
    <text evidence="1">Belongs to the glycosyltransferase 1 family. Bacterial/plant glycogen synthase subfamily.</text>
</comment>
<comment type="sequence caution" evidence="2">
    <conflict type="erroneous initiation">
        <sequence resource="EMBL-CDS" id="AAW73366"/>
    </conflict>
</comment>
<accession>Q5H6Q4</accession>
<sequence length="509" mass="54806">MLPALKKGGRPRDALGRFIRHHERLPVSLADTRGVLFVVSEMADFIKAGGLGDVAAALPRALRHRYDVRVLIPGYRAVLERAGKVEIVGRVLAHAALPACDIGRIVQSDGLPIYILLSRELFERDGSPYVSTSGSEFEDNAIRFATLSHAAADIAAGHAGLGWKPRLLHLNDWPCALAAGYVRWSGGTTPCLLTIHNLAYQGLVPYSMAGALGIPAERVAELEFYGQMSFLRGGIVNADHVNTVSVSYAKQITGPAQGCGLDRLLAGRAAKGALTGIVNGIDASWDPRTDEYLDSHFSVNQWQGRQDNAAQVRKAFGLRESTGPLFAVVSRLVHQKGLDLICEVAPQIVAAGGQIAVIGGGEPDIERQVAELTRRYPGQVGAFIGFEEGLARRMFAGADFLLMPSRFEPCGLSQMYAQRFGCLPIAHATGGLIDTVDDGVTGFLFQHASVEALRRCLERAFRTFRLPGLLAAMRRAAMLRPSGWDVAGNKYLSLYERTAAIAPALATVS</sequence>
<protein>
    <recommendedName>
        <fullName evidence="1">Glycogen synthase</fullName>
        <ecNumber evidence="1">2.4.1.21</ecNumber>
    </recommendedName>
    <alternativeName>
        <fullName evidence="1">Starch [bacterial glycogen] synthase</fullName>
    </alternativeName>
</protein>
<evidence type="ECO:0000255" key="1">
    <source>
        <dbReference type="HAMAP-Rule" id="MF_00484"/>
    </source>
</evidence>
<evidence type="ECO:0000305" key="2"/>
<proteinExistence type="inferred from homology"/>